<organism>
    <name type="scientific">Maricaulis maris (strain MCS10)</name>
    <name type="common">Caulobacter maris</name>
    <dbReference type="NCBI Taxonomy" id="394221"/>
    <lineage>
        <taxon>Bacteria</taxon>
        <taxon>Pseudomonadati</taxon>
        <taxon>Pseudomonadota</taxon>
        <taxon>Alphaproteobacteria</taxon>
        <taxon>Maricaulales</taxon>
        <taxon>Maricaulaceae</taxon>
        <taxon>Maricaulis</taxon>
    </lineage>
</organism>
<proteinExistence type="inferred from homology"/>
<feature type="chain" id="PRO_0000267052" description="Enolase">
    <location>
        <begin position="1"/>
        <end position="424"/>
    </location>
</feature>
<feature type="active site" description="Proton donor" evidence="1">
    <location>
        <position position="204"/>
    </location>
</feature>
<feature type="active site" description="Proton acceptor" evidence="1">
    <location>
        <position position="336"/>
    </location>
</feature>
<feature type="binding site" evidence="1">
    <location>
        <position position="162"/>
    </location>
    <ligand>
        <name>(2R)-2-phosphoglycerate</name>
        <dbReference type="ChEBI" id="CHEBI:58289"/>
    </ligand>
</feature>
<feature type="binding site" evidence="1">
    <location>
        <position position="241"/>
    </location>
    <ligand>
        <name>Mg(2+)</name>
        <dbReference type="ChEBI" id="CHEBI:18420"/>
    </ligand>
</feature>
<feature type="binding site" evidence="1">
    <location>
        <position position="284"/>
    </location>
    <ligand>
        <name>Mg(2+)</name>
        <dbReference type="ChEBI" id="CHEBI:18420"/>
    </ligand>
</feature>
<feature type="binding site" evidence="1">
    <location>
        <position position="311"/>
    </location>
    <ligand>
        <name>Mg(2+)</name>
        <dbReference type="ChEBI" id="CHEBI:18420"/>
    </ligand>
</feature>
<feature type="binding site" evidence="1">
    <location>
        <position position="336"/>
    </location>
    <ligand>
        <name>(2R)-2-phosphoglycerate</name>
        <dbReference type="ChEBI" id="CHEBI:58289"/>
    </ligand>
</feature>
<feature type="binding site" evidence="1">
    <location>
        <position position="365"/>
    </location>
    <ligand>
        <name>(2R)-2-phosphoglycerate</name>
        <dbReference type="ChEBI" id="CHEBI:58289"/>
    </ligand>
</feature>
<feature type="binding site" evidence="1">
    <location>
        <position position="366"/>
    </location>
    <ligand>
        <name>(2R)-2-phosphoglycerate</name>
        <dbReference type="ChEBI" id="CHEBI:58289"/>
    </ligand>
</feature>
<feature type="binding site" evidence="1">
    <location>
        <position position="387"/>
    </location>
    <ligand>
        <name>(2R)-2-phosphoglycerate</name>
        <dbReference type="ChEBI" id="CHEBI:58289"/>
    </ligand>
</feature>
<comment type="function">
    <text evidence="1">Catalyzes the reversible conversion of 2-phosphoglycerate (2-PG) into phosphoenolpyruvate (PEP). It is essential for the degradation of carbohydrates via glycolysis.</text>
</comment>
<comment type="catalytic activity">
    <reaction evidence="1">
        <text>(2R)-2-phosphoglycerate = phosphoenolpyruvate + H2O</text>
        <dbReference type="Rhea" id="RHEA:10164"/>
        <dbReference type="ChEBI" id="CHEBI:15377"/>
        <dbReference type="ChEBI" id="CHEBI:58289"/>
        <dbReference type="ChEBI" id="CHEBI:58702"/>
        <dbReference type="EC" id="4.2.1.11"/>
    </reaction>
</comment>
<comment type="cofactor">
    <cofactor evidence="1">
        <name>Mg(2+)</name>
        <dbReference type="ChEBI" id="CHEBI:18420"/>
    </cofactor>
    <text evidence="1">Binds a second Mg(2+) ion via substrate during catalysis.</text>
</comment>
<comment type="pathway">
    <text evidence="1">Carbohydrate degradation; glycolysis; pyruvate from D-glyceraldehyde 3-phosphate: step 4/5.</text>
</comment>
<comment type="subcellular location">
    <subcellularLocation>
        <location evidence="1">Cytoplasm</location>
    </subcellularLocation>
    <subcellularLocation>
        <location evidence="1">Secreted</location>
    </subcellularLocation>
    <subcellularLocation>
        <location evidence="1">Cell surface</location>
    </subcellularLocation>
    <text evidence="1">Fractions of enolase are present in both the cytoplasm and on the cell surface.</text>
</comment>
<comment type="similarity">
    <text evidence="1">Belongs to the enolase family.</text>
</comment>
<comment type="sequence caution" evidence="2">
    <conflict type="erroneous initiation">
        <sequence resource="EMBL-CDS" id="ABI65705"/>
    </conflict>
    <text>Extended N-terminus.</text>
</comment>
<evidence type="ECO:0000255" key="1">
    <source>
        <dbReference type="HAMAP-Rule" id="MF_00318"/>
    </source>
</evidence>
<evidence type="ECO:0000305" key="2"/>
<gene>
    <name evidence="1" type="primary">eno</name>
    <name type="ordered locus">Mmar10_1413</name>
</gene>
<keyword id="KW-0963">Cytoplasm</keyword>
<keyword id="KW-0324">Glycolysis</keyword>
<keyword id="KW-0456">Lyase</keyword>
<keyword id="KW-0460">Magnesium</keyword>
<keyword id="KW-0479">Metal-binding</keyword>
<keyword id="KW-1185">Reference proteome</keyword>
<keyword id="KW-0964">Secreted</keyword>
<sequence>MTAITDIIAREILDSRGNPTVEVDVLLEDGSFGRAAVPSGASTGAHEAVEMRDGGERYGGKGVLKACDLVEGEIFEAIAGMDAEDQRRIDEAMIELDGTANKSRLGANAMLGVSLAAAHAAADVQGLPLYRYIGGMNARVLPTPMMNIINGGAHADNPIDFQEFMIMPVGLPSFSEALRCGAEVFHALKSRLKADGLNTNVGDEGGFAPHLRSAEQALDVIMDAIEAAGYKPGEDVALALDVASTEFYKDGQYVLEGADESHDAEGFSQYLEKLVNKYPIVSIEDGMAEDDWDGWRALTQRLDGRCQLVGDDLFVTNPERLAKGIETGAANAILVKVNQIGTLSETLDAVDMALRSGYGAVMSHRSGETEDATIADLAVATNCGQIKTGSLARSDRTAKYNQLLRIESLLGETGMFAGPSGLAS</sequence>
<name>ENO_MARMM</name>
<dbReference type="EC" id="4.2.1.11" evidence="1"/>
<dbReference type="EMBL" id="CP000449">
    <property type="protein sequence ID" value="ABI65705.1"/>
    <property type="status" value="ALT_INIT"/>
    <property type="molecule type" value="Genomic_DNA"/>
</dbReference>
<dbReference type="RefSeq" id="WP_041636860.1">
    <property type="nucleotide sequence ID" value="NC_008347.1"/>
</dbReference>
<dbReference type="SMR" id="Q0APT2"/>
<dbReference type="STRING" id="394221.Mmar10_1413"/>
<dbReference type="KEGG" id="mmr:Mmar10_1413"/>
<dbReference type="eggNOG" id="COG0148">
    <property type="taxonomic scope" value="Bacteria"/>
</dbReference>
<dbReference type="HOGENOM" id="CLU_031223_2_1_5"/>
<dbReference type="OrthoDB" id="9804716at2"/>
<dbReference type="UniPathway" id="UPA00109">
    <property type="reaction ID" value="UER00187"/>
</dbReference>
<dbReference type="Proteomes" id="UP000001964">
    <property type="component" value="Chromosome"/>
</dbReference>
<dbReference type="GO" id="GO:0009986">
    <property type="term" value="C:cell surface"/>
    <property type="evidence" value="ECO:0007669"/>
    <property type="project" value="UniProtKB-SubCell"/>
</dbReference>
<dbReference type="GO" id="GO:0005576">
    <property type="term" value="C:extracellular region"/>
    <property type="evidence" value="ECO:0007669"/>
    <property type="project" value="UniProtKB-SubCell"/>
</dbReference>
<dbReference type="GO" id="GO:0000015">
    <property type="term" value="C:phosphopyruvate hydratase complex"/>
    <property type="evidence" value="ECO:0007669"/>
    <property type="project" value="InterPro"/>
</dbReference>
<dbReference type="GO" id="GO:0000287">
    <property type="term" value="F:magnesium ion binding"/>
    <property type="evidence" value="ECO:0007669"/>
    <property type="project" value="UniProtKB-UniRule"/>
</dbReference>
<dbReference type="GO" id="GO:0004634">
    <property type="term" value="F:phosphopyruvate hydratase activity"/>
    <property type="evidence" value="ECO:0007669"/>
    <property type="project" value="UniProtKB-UniRule"/>
</dbReference>
<dbReference type="GO" id="GO:0006096">
    <property type="term" value="P:glycolytic process"/>
    <property type="evidence" value="ECO:0007669"/>
    <property type="project" value="UniProtKB-UniRule"/>
</dbReference>
<dbReference type="CDD" id="cd03313">
    <property type="entry name" value="enolase"/>
    <property type="match status" value="1"/>
</dbReference>
<dbReference type="FunFam" id="3.20.20.120:FF:000001">
    <property type="entry name" value="Enolase"/>
    <property type="match status" value="1"/>
</dbReference>
<dbReference type="FunFam" id="3.30.390.10:FF:000001">
    <property type="entry name" value="Enolase"/>
    <property type="match status" value="1"/>
</dbReference>
<dbReference type="Gene3D" id="3.20.20.120">
    <property type="entry name" value="Enolase-like C-terminal domain"/>
    <property type="match status" value="1"/>
</dbReference>
<dbReference type="Gene3D" id="3.30.390.10">
    <property type="entry name" value="Enolase-like, N-terminal domain"/>
    <property type="match status" value="1"/>
</dbReference>
<dbReference type="HAMAP" id="MF_00318">
    <property type="entry name" value="Enolase"/>
    <property type="match status" value="1"/>
</dbReference>
<dbReference type="InterPro" id="IPR000941">
    <property type="entry name" value="Enolase"/>
</dbReference>
<dbReference type="InterPro" id="IPR036849">
    <property type="entry name" value="Enolase-like_C_sf"/>
</dbReference>
<dbReference type="InterPro" id="IPR029017">
    <property type="entry name" value="Enolase-like_N"/>
</dbReference>
<dbReference type="InterPro" id="IPR020810">
    <property type="entry name" value="Enolase_C"/>
</dbReference>
<dbReference type="InterPro" id="IPR020809">
    <property type="entry name" value="Enolase_CS"/>
</dbReference>
<dbReference type="InterPro" id="IPR020811">
    <property type="entry name" value="Enolase_N"/>
</dbReference>
<dbReference type="NCBIfam" id="TIGR01060">
    <property type="entry name" value="eno"/>
    <property type="match status" value="1"/>
</dbReference>
<dbReference type="PANTHER" id="PTHR11902">
    <property type="entry name" value="ENOLASE"/>
    <property type="match status" value="1"/>
</dbReference>
<dbReference type="PANTHER" id="PTHR11902:SF1">
    <property type="entry name" value="ENOLASE"/>
    <property type="match status" value="1"/>
</dbReference>
<dbReference type="Pfam" id="PF00113">
    <property type="entry name" value="Enolase_C"/>
    <property type="match status" value="1"/>
</dbReference>
<dbReference type="Pfam" id="PF03952">
    <property type="entry name" value="Enolase_N"/>
    <property type="match status" value="1"/>
</dbReference>
<dbReference type="PIRSF" id="PIRSF001400">
    <property type="entry name" value="Enolase"/>
    <property type="match status" value="1"/>
</dbReference>
<dbReference type="PRINTS" id="PR00148">
    <property type="entry name" value="ENOLASE"/>
</dbReference>
<dbReference type="SFLD" id="SFLDS00001">
    <property type="entry name" value="Enolase"/>
    <property type="match status" value="1"/>
</dbReference>
<dbReference type="SFLD" id="SFLDF00002">
    <property type="entry name" value="enolase"/>
    <property type="match status" value="1"/>
</dbReference>
<dbReference type="SMART" id="SM01192">
    <property type="entry name" value="Enolase_C"/>
    <property type="match status" value="1"/>
</dbReference>
<dbReference type="SMART" id="SM01193">
    <property type="entry name" value="Enolase_N"/>
    <property type="match status" value="1"/>
</dbReference>
<dbReference type="SUPFAM" id="SSF51604">
    <property type="entry name" value="Enolase C-terminal domain-like"/>
    <property type="match status" value="1"/>
</dbReference>
<dbReference type="SUPFAM" id="SSF54826">
    <property type="entry name" value="Enolase N-terminal domain-like"/>
    <property type="match status" value="1"/>
</dbReference>
<dbReference type="PROSITE" id="PS00164">
    <property type="entry name" value="ENOLASE"/>
    <property type="match status" value="1"/>
</dbReference>
<accession>Q0APT2</accession>
<reference key="1">
    <citation type="submission" date="2006-08" db="EMBL/GenBank/DDBJ databases">
        <title>Complete sequence of Maricaulis maris MCS10.</title>
        <authorList>
            <consortium name="US DOE Joint Genome Institute"/>
            <person name="Copeland A."/>
            <person name="Lucas S."/>
            <person name="Lapidus A."/>
            <person name="Barry K."/>
            <person name="Detter J.C."/>
            <person name="Glavina del Rio T."/>
            <person name="Hammon N."/>
            <person name="Israni S."/>
            <person name="Dalin E."/>
            <person name="Tice H."/>
            <person name="Pitluck S."/>
            <person name="Saunders E."/>
            <person name="Brettin T."/>
            <person name="Bruce D."/>
            <person name="Han C."/>
            <person name="Tapia R."/>
            <person name="Gilna P."/>
            <person name="Schmutz J."/>
            <person name="Larimer F."/>
            <person name="Land M."/>
            <person name="Hauser L."/>
            <person name="Kyrpides N."/>
            <person name="Mikhailova N."/>
            <person name="Viollier P."/>
            <person name="Stephens C."/>
            <person name="Richardson P."/>
        </authorList>
    </citation>
    <scope>NUCLEOTIDE SEQUENCE [LARGE SCALE GENOMIC DNA]</scope>
    <source>
        <strain>MCS10</strain>
    </source>
</reference>
<protein>
    <recommendedName>
        <fullName evidence="1">Enolase</fullName>
        <ecNumber evidence="1">4.2.1.11</ecNumber>
    </recommendedName>
    <alternativeName>
        <fullName evidence="1">2-phospho-D-glycerate hydro-lyase</fullName>
    </alternativeName>
    <alternativeName>
        <fullName evidence="1">2-phosphoglycerate dehydratase</fullName>
    </alternativeName>
</protein>